<dbReference type="EC" id="6.1.1.17" evidence="1"/>
<dbReference type="EMBL" id="AE004969">
    <property type="protein sequence ID" value="AAW90539.1"/>
    <property type="molecule type" value="Genomic_DNA"/>
</dbReference>
<dbReference type="RefSeq" id="WP_010951371.1">
    <property type="nucleotide sequence ID" value="NC_002946.2"/>
</dbReference>
<dbReference type="RefSeq" id="YP_208951.1">
    <property type="nucleotide sequence ID" value="NC_002946.2"/>
</dbReference>
<dbReference type="SMR" id="Q5F5J8"/>
<dbReference type="STRING" id="242231.NGO_1926"/>
<dbReference type="KEGG" id="ngo:NGO_1926"/>
<dbReference type="PATRIC" id="fig|242231.10.peg.2322"/>
<dbReference type="HOGENOM" id="CLU_015768_6_0_4"/>
<dbReference type="Proteomes" id="UP000000535">
    <property type="component" value="Chromosome"/>
</dbReference>
<dbReference type="GO" id="GO:0005829">
    <property type="term" value="C:cytosol"/>
    <property type="evidence" value="ECO:0007669"/>
    <property type="project" value="TreeGrafter"/>
</dbReference>
<dbReference type="GO" id="GO:0005524">
    <property type="term" value="F:ATP binding"/>
    <property type="evidence" value="ECO:0007669"/>
    <property type="project" value="UniProtKB-UniRule"/>
</dbReference>
<dbReference type="GO" id="GO:0004818">
    <property type="term" value="F:glutamate-tRNA ligase activity"/>
    <property type="evidence" value="ECO:0007669"/>
    <property type="project" value="UniProtKB-UniRule"/>
</dbReference>
<dbReference type="GO" id="GO:0000049">
    <property type="term" value="F:tRNA binding"/>
    <property type="evidence" value="ECO:0007669"/>
    <property type="project" value="InterPro"/>
</dbReference>
<dbReference type="GO" id="GO:0008270">
    <property type="term" value="F:zinc ion binding"/>
    <property type="evidence" value="ECO:0007669"/>
    <property type="project" value="InterPro"/>
</dbReference>
<dbReference type="GO" id="GO:0006424">
    <property type="term" value="P:glutamyl-tRNA aminoacylation"/>
    <property type="evidence" value="ECO:0007669"/>
    <property type="project" value="UniProtKB-UniRule"/>
</dbReference>
<dbReference type="CDD" id="cd00808">
    <property type="entry name" value="GluRS_core"/>
    <property type="match status" value="1"/>
</dbReference>
<dbReference type="FunFam" id="3.40.50.620:FF:000007">
    <property type="entry name" value="Glutamate--tRNA ligase"/>
    <property type="match status" value="1"/>
</dbReference>
<dbReference type="Gene3D" id="1.10.10.350">
    <property type="match status" value="1"/>
</dbReference>
<dbReference type="Gene3D" id="3.40.50.620">
    <property type="entry name" value="HUPs"/>
    <property type="match status" value="1"/>
</dbReference>
<dbReference type="HAMAP" id="MF_00022">
    <property type="entry name" value="Glu_tRNA_synth_type1"/>
    <property type="match status" value="1"/>
</dbReference>
<dbReference type="InterPro" id="IPR045462">
    <property type="entry name" value="aa-tRNA-synth_I_cd-bd"/>
</dbReference>
<dbReference type="InterPro" id="IPR020751">
    <property type="entry name" value="aa-tRNA-synth_I_codon-bd_sub2"/>
</dbReference>
<dbReference type="InterPro" id="IPR001412">
    <property type="entry name" value="aa-tRNA-synth_I_CS"/>
</dbReference>
<dbReference type="InterPro" id="IPR008925">
    <property type="entry name" value="aa_tRNA-synth_I_cd-bd_sf"/>
</dbReference>
<dbReference type="InterPro" id="IPR004527">
    <property type="entry name" value="Glu-tRNA-ligase_bac/mito"/>
</dbReference>
<dbReference type="InterPro" id="IPR000924">
    <property type="entry name" value="Glu/Gln-tRNA-synth"/>
</dbReference>
<dbReference type="InterPro" id="IPR020058">
    <property type="entry name" value="Glu/Gln-tRNA-synth_Ib_cat-dom"/>
</dbReference>
<dbReference type="InterPro" id="IPR049940">
    <property type="entry name" value="GluQ/Sye"/>
</dbReference>
<dbReference type="InterPro" id="IPR033910">
    <property type="entry name" value="GluRS_core"/>
</dbReference>
<dbReference type="InterPro" id="IPR014729">
    <property type="entry name" value="Rossmann-like_a/b/a_fold"/>
</dbReference>
<dbReference type="NCBIfam" id="TIGR00464">
    <property type="entry name" value="gltX_bact"/>
    <property type="match status" value="1"/>
</dbReference>
<dbReference type="PANTHER" id="PTHR43311">
    <property type="entry name" value="GLUTAMATE--TRNA LIGASE"/>
    <property type="match status" value="1"/>
</dbReference>
<dbReference type="PANTHER" id="PTHR43311:SF2">
    <property type="entry name" value="GLUTAMATE--TRNA LIGASE, MITOCHONDRIAL-RELATED"/>
    <property type="match status" value="1"/>
</dbReference>
<dbReference type="Pfam" id="PF19269">
    <property type="entry name" value="Anticodon_2"/>
    <property type="match status" value="1"/>
</dbReference>
<dbReference type="Pfam" id="PF00749">
    <property type="entry name" value="tRNA-synt_1c"/>
    <property type="match status" value="1"/>
</dbReference>
<dbReference type="PRINTS" id="PR00987">
    <property type="entry name" value="TRNASYNTHGLU"/>
</dbReference>
<dbReference type="SUPFAM" id="SSF48163">
    <property type="entry name" value="An anticodon-binding domain of class I aminoacyl-tRNA synthetases"/>
    <property type="match status" value="1"/>
</dbReference>
<dbReference type="SUPFAM" id="SSF52374">
    <property type="entry name" value="Nucleotidylyl transferase"/>
    <property type="match status" value="1"/>
</dbReference>
<dbReference type="PROSITE" id="PS00178">
    <property type="entry name" value="AA_TRNA_LIGASE_I"/>
    <property type="match status" value="1"/>
</dbReference>
<sequence>MTVKTRFAPSPTGYLHIGGVRTALFSWAFARHHKGEFLLRIEDTDLARSTAESVNIILDGMKWVGLDYDNADNVVYQTRRFDRYKEVIAELLAKGDAYYCYCSKEELEAMREKAEKEGTATYDRRWRPEAGKTLPEIPAGVQPVVRFKTPLDGVTKWTDLVKGEISIPNEALDDLIIARADGTPTYNFCAVVDDYDMGVTHIIRGDDHVNNTPKQINILKAIGANLPEYGHLPMILNEQGKKISKRSGDTVAITDFGAMGILPEAMLNYLARLGWAHGDDEFFTTEQFIEWFDLKDVSPSPSRMDLKKLYWINGEHIKITPDGKLTELVKPRLALRDIHETEKPALEDVLALVKDRAQDLNALADECLYFYKKQVPAEADVAKHWDDEAAARMLRFAERLEGLEDWNAKAIHDLFKPFCDEEGIKMGKLGMPLRLAVCGTAKTPSVDAVLALISKEKVLKRIRA</sequence>
<reference key="1">
    <citation type="submission" date="2003-03" db="EMBL/GenBank/DDBJ databases">
        <title>The complete genome sequence of Neisseria gonorrhoeae.</title>
        <authorList>
            <person name="Lewis L.A."/>
            <person name="Gillaspy A.F."/>
            <person name="McLaughlin R.E."/>
            <person name="Gipson M."/>
            <person name="Ducey T.F."/>
            <person name="Ownbey T."/>
            <person name="Hartman K."/>
            <person name="Nydick C."/>
            <person name="Carson M.B."/>
            <person name="Vaughn J."/>
            <person name="Thomson C."/>
            <person name="Song L."/>
            <person name="Lin S."/>
            <person name="Yuan X."/>
            <person name="Najar F."/>
            <person name="Zhan M."/>
            <person name="Ren Q."/>
            <person name="Zhu H."/>
            <person name="Qi S."/>
            <person name="Kenton S.M."/>
            <person name="Lai H."/>
            <person name="White J.D."/>
            <person name="Clifton S."/>
            <person name="Roe B.A."/>
            <person name="Dyer D.W."/>
        </authorList>
    </citation>
    <scope>NUCLEOTIDE SEQUENCE [LARGE SCALE GENOMIC DNA]</scope>
    <source>
        <strain>ATCC 700825 / FA 1090</strain>
    </source>
</reference>
<proteinExistence type="inferred from homology"/>
<gene>
    <name evidence="1" type="primary">gltX</name>
    <name type="ordered locus">NGO_1926</name>
</gene>
<feature type="chain" id="PRO_0000119611" description="Glutamate--tRNA ligase">
    <location>
        <begin position="1"/>
        <end position="464"/>
    </location>
</feature>
<feature type="short sequence motif" description="'HIGH' region" evidence="1">
    <location>
        <begin position="9"/>
        <end position="19"/>
    </location>
</feature>
<feature type="short sequence motif" description="'KMSKS' region" evidence="1">
    <location>
        <begin position="242"/>
        <end position="246"/>
    </location>
</feature>
<feature type="binding site" evidence="1">
    <location>
        <position position="245"/>
    </location>
    <ligand>
        <name>ATP</name>
        <dbReference type="ChEBI" id="CHEBI:30616"/>
    </ligand>
</feature>
<comment type="function">
    <text evidence="1">Catalyzes the attachment of glutamate to tRNA(Glu) in a two-step reaction: glutamate is first activated by ATP to form Glu-AMP and then transferred to the acceptor end of tRNA(Glu).</text>
</comment>
<comment type="catalytic activity">
    <reaction evidence="1">
        <text>tRNA(Glu) + L-glutamate + ATP = L-glutamyl-tRNA(Glu) + AMP + diphosphate</text>
        <dbReference type="Rhea" id="RHEA:23540"/>
        <dbReference type="Rhea" id="RHEA-COMP:9663"/>
        <dbReference type="Rhea" id="RHEA-COMP:9680"/>
        <dbReference type="ChEBI" id="CHEBI:29985"/>
        <dbReference type="ChEBI" id="CHEBI:30616"/>
        <dbReference type="ChEBI" id="CHEBI:33019"/>
        <dbReference type="ChEBI" id="CHEBI:78442"/>
        <dbReference type="ChEBI" id="CHEBI:78520"/>
        <dbReference type="ChEBI" id="CHEBI:456215"/>
        <dbReference type="EC" id="6.1.1.17"/>
    </reaction>
</comment>
<comment type="subunit">
    <text evidence="1">Monomer.</text>
</comment>
<comment type="subcellular location">
    <subcellularLocation>
        <location evidence="1">Cytoplasm</location>
    </subcellularLocation>
</comment>
<comment type="similarity">
    <text evidence="1">Belongs to the class-I aminoacyl-tRNA synthetase family. Glutamate--tRNA ligase type 1 subfamily.</text>
</comment>
<accession>Q5F5J8</accession>
<keyword id="KW-0030">Aminoacyl-tRNA synthetase</keyword>
<keyword id="KW-0067">ATP-binding</keyword>
<keyword id="KW-0963">Cytoplasm</keyword>
<keyword id="KW-0436">Ligase</keyword>
<keyword id="KW-0547">Nucleotide-binding</keyword>
<keyword id="KW-0648">Protein biosynthesis</keyword>
<keyword id="KW-1185">Reference proteome</keyword>
<organism>
    <name type="scientific">Neisseria gonorrhoeae (strain ATCC 700825 / FA 1090)</name>
    <dbReference type="NCBI Taxonomy" id="242231"/>
    <lineage>
        <taxon>Bacteria</taxon>
        <taxon>Pseudomonadati</taxon>
        <taxon>Pseudomonadota</taxon>
        <taxon>Betaproteobacteria</taxon>
        <taxon>Neisseriales</taxon>
        <taxon>Neisseriaceae</taxon>
        <taxon>Neisseria</taxon>
    </lineage>
</organism>
<protein>
    <recommendedName>
        <fullName evidence="1">Glutamate--tRNA ligase</fullName>
        <ecNumber evidence="1">6.1.1.17</ecNumber>
    </recommendedName>
    <alternativeName>
        <fullName evidence="1">Glutamyl-tRNA synthetase</fullName>
        <shortName evidence="1">GluRS</shortName>
    </alternativeName>
</protein>
<name>SYE_NEIG1</name>
<evidence type="ECO:0000255" key="1">
    <source>
        <dbReference type="HAMAP-Rule" id="MF_00022"/>
    </source>
</evidence>